<keyword id="KW-0217">Developmental protein</keyword>
<keyword id="KW-0256">Endoplasmic reticulum</keyword>
<keyword id="KW-0275">Fatty acid biosynthesis</keyword>
<keyword id="KW-0276">Fatty acid metabolism</keyword>
<keyword id="KW-0325">Glycoprotein</keyword>
<keyword id="KW-0444">Lipid biosynthesis</keyword>
<keyword id="KW-0443">Lipid metabolism</keyword>
<keyword id="KW-0456">Lyase</keyword>
<keyword id="KW-0472">Membrane</keyword>
<keyword id="KW-1185">Reference proteome</keyword>
<keyword id="KW-0812">Transmembrane</keyword>
<keyword id="KW-1133">Transmembrane helix</keyword>
<accession>Q9N1R5</accession>
<evidence type="ECO:0000250" key="1">
    <source>
        <dbReference type="UniProtKB" id="B0YJ81"/>
    </source>
</evidence>
<evidence type="ECO:0000250" key="2">
    <source>
        <dbReference type="UniProtKB" id="P40857"/>
    </source>
</evidence>
<evidence type="ECO:0000255" key="3"/>
<evidence type="ECO:0000256" key="4">
    <source>
        <dbReference type="SAM" id="MobiDB-lite"/>
    </source>
</evidence>
<evidence type="ECO:0000269" key="5">
    <source>
    </source>
</evidence>
<evidence type="ECO:0000305" key="6"/>
<reference key="1">
    <citation type="journal article" date="1999" name="Genomics">
        <title>Molecular cloning, chromosomal mapping, and developmental expression of a novel protein tyrosine phosphatase-like gene.</title>
        <authorList>
            <person name="Uwanogho D.A."/>
            <person name="Hardcastle Z."/>
            <person name="Balogh P."/>
            <person name="Mirza G."/>
            <person name="Thornburg K.L."/>
            <person name="Ragoussis J."/>
            <person name="Sharpe P.T."/>
        </authorList>
    </citation>
    <scope>NUCLEOTIDE SEQUENCE [MRNA]</scope>
    <scope>TISSUE SPECIFICITY</scope>
</reference>
<protein>
    <recommendedName>
        <fullName evidence="6">Very-long-chain (3R)-3-hydroxyacyl-CoA dehydratase 1</fullName>
        <ecNumber evidence="1">4.2.1.134</ecNumber>
    </recommendedName>
    <alternativeName>
        <fullName evidence="6">3-hydroxyacyl-CoA dehydratase 1</fullName>
        <shortName evidence="6">HACD1</shortName>
    </alternativeName>
    <alternativeName>
        <fullName evidence="6">Protein-tyrosine phosphatase-like member A</fullName>
    </alternativeName>
</protein>
<feature type="chain" id="PRO_0000349317" description="Very-long-chain (3R)-3-hydroxyacyl-CoA dehydratase 1">
    <location>
        <begin position="1"/>
        <end position="288"/>
    </location>
</feature>
<feature type="topological domain" description="Cytoplasmic" evidence="3">
    <location>
        <begin position="1"/>
        <end position="75"/>
    </location>
</feature>
<feature type="transmembrane region" description="Helical" evidence="3">
    <location>
        <begin position="76"/>
        <end position="95"/>
    </location>
</feature>
<feature type="topological domain" description="Lumenal" evidence="3">
    <location>
        <begin position="96"/>
        <end position="114"/>
    </location>
</feature>
<feature type="transmembrane region" description="Helical" evidence="3">
    <location>
        <begin position="115"/>
        <end position="131"/>
    </location>
</feature>
<feature type="topological domain" description="Cytoplasmic" evidence="3">
    <location>
        <begin position="132"/>
        <end position="141"/>
    </location>
</feature>
<feature type="transmembrane region" description="Helical" evidence="3">
    <location>
        <begin position="142"/>
        <end position="159"/>
    </location>
</feature>
<feature type="topological domain" description="Lumenal" evidence="3">
    <location>
        <begin position="160"/>
        <end position="165"/>
    </location>
</feature>
<feature type="transmembrane region" description="Helical" evidence="3">
    <location>
        <begin position="166"/>
        <end position="180"/>
    </location>
</feature>
<feature type="topological domain" description="Cytoplasmic" evidence="3">
    <location>
        <begin position="181"/>
        <end position="203"/>
    </location>
</feature>
<feature type="transmembrane region" description="Helical" evidence="3">
    <location>
        <begin position="204"/>
        <end position="221"/>
    </location>
</feature>
<feature type="topological domain" description="Lumenal" evidence="3">
    <location>
        <begin position="222"/>
        <end position="251"/>
    </location>
</feature>
<feature type="transmembrane region" description="Helical" evidence="3">
    <location>
        <begin position="252"/>
        <end position="269"/>
    </location>
</feature>
<feature type="topological domain" description="Cytoplasmic" evidence="3">
    <location>
        <begin position="270"/>
        <end position="288"/>
    </location>
</feature>
<feature type="region of interest" description="Disordered" evidence="4">
    <location>
        <begin position="1"/>
        <end position="59"/>
    </location>
</feature>
<feature type="active site" evidence="2">
    <location>
        <position position="210"/>
    </location>
</feature>
<feature type="active site" evidence="2">
    <location>
        <position position="217"/>
    </location>
</feature>
<feature type="glycosylation site" description="N-linked (GlcNAc...) asparagine" evidence="3">
    <location>
        <position position="243"/>
    </location>
</feature>
<organism>
    <name type="scientific">Ovis aries</name>
    <name type="common">Sheep</name>
    <dbReference type="NCBI Taxonomy" id="9940"/>
    <lineage>
        <taxon>Eukaryota</taxon>
        <taxon>Metazoa</taxon>
        <taxon>Chordata</taxon>
        <taxon>Craniata</taxon>
        <taxon>Vertebrata</taxon>
        <taxon>Euteleostomi</taxon>
        <taxon>Mammalia</taxon>
        <taxon>Eutheria</taxon>
        <taxon>Laurasiatheria</taxon>
        <taxon>Artiodactyla</taxon>
        <taxon>Ruminantia</taxon>
        <taxon>Pecora</taxon>
        <taxon>Bovidae</taxon>
        <taxon>Caprinae</taxon>
        <taxon>Ovis</taxon>
    </lineage>
</organism>
<sequence>MGRLTEAAAAGGGASAARSAGPPPAPLPLSSTSPGCAAAMASSEEDGTNGGASEASDEREAVGKRRRLGLLATIWLTFYNIAMTAGWLVLAIAMVRFYMEKGTHKGLYKSIQKTLKFFQTFALLEIVHCLIGIVPTSVLVAGVQVSSRIFMVWLVTHSIKPIQNEESVVLFLVAWTVTEITRYSFYTFSLLDHLPYFIKWARYNFFIILYPVGVAGELLTIYAALPYVKKTGMFSIRLPNKYNVSFDYYYFLLITMASYIPLFPQLYFHMLRQRRKVLHGEVIVEKDD</sequence>
<name>HACD1_SHEEP</name>
<proteinExistence type="evidence at transcript level"/>
<gene>
    <name type="primary">HACD1</name>
    <name evidence="6" type="synonym">PTPLA</name>
</gene>
<comment type="function">
    <text evidence="1">Catalyzes the third of the four reactions of the long-chain fatty acids elongation cycle. This endoplasmic reticulum-bound enzymatic process, allows the addition of two carbons to the chain of long- and very long-chain fatty acids/VLCFAs per cycle. This enzyme catalyzes the dehydration of the 3-hydroxyacyl-CoA intermediate into trans-2,3-enoyl-CoA, within each cycle of fatty acid elongation. Thereby, it participates in the production of VLCFAs of different chain lengths that are involved in multiple biological processes as precursors of membrane lipids and lipid mediators.</text>
</comment>
<comment type="catalytic activity">
    <reaction evidence="1">
        <text>a very-long-chain (3R)-3-hydroxyacyl-CoA = a very-long-chain (2E)-enoyl-CoA + H2O</text>
        <dbReference type="Rhea" id="RHEA:45812"/>
        <dbReference type="ChEBI" id="CHEBI:15377"/>
        <dbReference type="ChEBI" id="CHEBI:83728"/>
        <dbReference type="ChEBI" id="CHEBI:85440"/>
        <dbReference type="EC" id="4.2.1.134"/>
    </reaction>
    <physiologicalReaction direction="left-to-right" evidence="1">
        <dbReference type="Rhea" id="RHEA:45813"/>
    </physiologicalReaction>
</comment>
<comment type="catalytic activity">
    <reaction evidence="1">
        <text>(3R)-hydroxyhexadecanoyl-CoA = (2E)-hexadecenoyl-CoA + H2O</text>
        <dbReference type="Rhea" id="RHEA:39159"/>
        <dbReference type="ChEBI" id="CHEBI:15377"/>
        <dbReference type="ChEBI" id="CHEBI:61526"/>
        <dbReference type="ChEBI" id="CHEBI:74278"/>
    </reaction>
    <physiologicalReaction direction="left-to-right" evidence="1">
        <dbReference type="Rhea" id="RHEA:39160"/>
    </physiologicalReaction>
</comment>
<comment type="catalytic activity">
    <reaction evidence="1">
        <text>(3R)-hydroxyoctadecanoyl-CoA = (2E)-octadecenoyl-CoA + H2O</text>
        <dbReference type="Rhea" id="RHEA:39155"/>
        <dbReference type="ChEBI" id="CHEBI:15377"/>
        <dbReference type="ChEBI" id="CHEBI:71412"/>
        <dbReference type="ChEBI" id="CHEBI:76374"/>
    </reaction>
    <physiologicalReaction direction="left-to-right" evidence="1">
        <dbReference type="Rhea" id="RHEA:39156"/>
    </physiologicalReaction>
</comment>
<comment type="catalytic activity">
    <reaction evidence="1">
        <text>(3R)-hydroxyeicosanoyl-CoA = (2E)-eicosenoyl-CoA + H2O</text>
        <dbReference type="Rhea" id="RHEA:39175"/>
        <dbReference type="ChEBI" id="CHEBI:15377"/>
        <dbReference type="ChEBI" id="CHEBI:74691"/>
        <dbReference type="ChEBI" id="CHEBI:76373"/>
    </reaction>
    <physiologicalReaction direction="left-to-right" evidence="1">
        <dbReference type="Rhea" id="RHEA:39176"/>
    </physiologicalReaction>
</comment>
<comment type="catalytic activity">
    <reaction evidence="1">
        <text>(3R)-hydroxydocosanoyl-CoA = (2E)-docosenoyl-CoA + H2O</text>
        <dbReference type="Rhea" id="RHEA:39187"/>
        <dbReference type="ChEBI" id="CHEBI:15377"/>
        <dbReference type="ChEBI" id="CHEBI:74692"/>
        <dbReference type="ChEBI" id="CHEBI:76375"/>
    </reaction>
    <physiologicalReaction direction="left-to-right" evidence="1">
        <dbReference type="Rhea" id="RHEA:39188"/>
    </physiologicalReaction>
</comment>
<comment type="catalytic activity">
    <reaction evidence="1">
        <text>(3R)-hydroxytetracosanoyl-CoA = (2E)-tetracosenoyl-CoA + H2O</text>
        <dbReference type="Rhea" id="RHEA:39199"/>
        <dbReference type="ChEBI" id="CHEBI:15377"/>
        <dbReference type="ChEBI" id="CHEBI:74693"/>
        <dbReference type="ChEBI" id="CHEBI:76377"/>
    </reaction>
    <physiologicalReaction direction="left-to-right" evidence="1">
        <dbReference type="Rhea" id="RHEA:39200"/>
    </physiologicalReaction>
</comment>
<comment type="catalytic activity">
    <reaction evidence="1">
        <text>(3R)-hydroxyhexacosanoyl-CoA = (2E)-hexacosenoyl-CoA + H2O</text>
        <dbReference type="Rhea" id="RHEA:39211"/>
        <dbReference type="ChEBI" id="CHEBI:15377"/>
        <dbReference type="ChEBI" id="CHEBI:74281"/>
        <dbReference type="ChEBI" id="CHEBI:76378"/>
    </reaction>
    <physiologicalReaction direction="left-to-right" evidence="1">
        <dbReference type="Rhea" id="RHEA:39212"/>
    </physiologicalReaction>
</comment>
<comment type="pathway">
    <text evidence="1">Lipid metabolism; fatty acid biosynthesis.</text>
</comment>
<comment type="subunit">
    <text evidence="1">May interact with enzymes of the ELO family (including ELOVL1); with those enzymes that mediate condensation, the first of the four steps of the reaction cycle responsible for fatty acids elongation, may be part of a larger fatty acids elongase complex. Interacts with TECR (By similarity).</text>
</comment>
<comment type="subcellular location">
    <subcellularLocation>
        <location evidence="1">Endoplasmic reticulum membrane</location>
        <topology evidence="1">Multi-pass membrane protein</topology>
    </subcellularLocation>
</comment>
<comment type="tissue specificity">
    <text evidence="5">Expressed in heart.</text>
</comment>
<comment type="PTM">
    <text evidence="1">N-glycosylated.</text>
</comment>
<comment type="similarity">
    <text evidence="6">Belongs to the very long-chain fatty acids dehydratase HACD family.</text>
</comment>
<comment type="caution">
    <text evidence="1">Shares some similarity with tyrosine phosphatase proteins but it has probably no phosphatase activity.</text>
</comment>
<dbReference type="EC" id="4.2.1.134" evidence="1"/>
<dbReference type="EMBL" id="AF162707">
    <property type="protein sequence ID" value="AAF29469.1"/>
    <property type="molecule type" value="mRNA"/>
</dbReference>
<dbReference type="RefSeq" id="NP_001009443.1">
    <property type="nucleotide sequence ID" value="NM_001009443.1"/>
</dbReference>
<dbReference type="STRING" id="9940.ENSOARP00000012420"/>
<dbReference type="GlyCosmos" id="Q9N1R5">
    <property type="glycosylation" value="1 site, No reported glycans"/>
</dbReference>
<dbReference type="PaxDb" id="9940-ENSOARP00000012420"/>
<dbReference type="GeneID" id="443484"/>
<dbReference type="KEGG" id="oas:443484"/>
<dbReference type="CTD" id="9200"/>
<dbReference type="eggNOG" id="KOG3187">
    <property type="taxonomic scope" value="Eukaryota"/>
</dbReference>
<dbReference type="OrthoDB" id="46988at2759"/>
<dbReference type="UniPathway" id="UPA00094"/>
<dbReference type="Proteomes" id="UP000002356">
    <property type="component" value="Unplaced"/>
</dbReference>
<dbReference type="GO" id="GO:0005783">
    <property type="term" value="C:endoplasmic reticulum"/>
    <property type="evidence" value="ECO:0000250"/>
    <property type="project" value="UniProtKB"/>
</dbReference>
<dbReference type="GO" id="GO:0005789">
    <property type="term" value="C:endoplasmic reticulum membrane"/>
    <property type="evidence" value="ECO:0007669"/>
    <property type="project" value="UniProtKB-SubCell"/>
</dbReference>
<dbReference type="GO" id="GO:0019899">
    <property type="term" value="F:enzyme binding"/>
    <property type="evidence" value="ECO:0000250"/>
    <property type="project" value="UniProtKB"/>
</dbReference>
<dbReference type="GO" id="GO:0102158">
    <property type="term" value="F:very-long-chain (3R)-3-hydroxyacyl-CoA dehydratase activity"/>
    <property type="evidence" value="ECO:0000250"/>
    <property type="project" value="UniProtKB"/>
</dbReference>
<dbReference type="GO" id="GO:0030497">
    <property type="term" value="P:fatty acid elongation"/>
    <property type="evidence" value="ECO:0000250"/>
    <property type="project" value="UniProtKB"/>
</dbReference>
<dbReference type="GO" id="GO:0030148">
    <property type="term" value="P:sphingolipid biosynthetic process"/>
    <property type="evidence" value="ECO:0000250"/>
    <property type="project" value="UniProtKB"/>
</dbReference>
<dbReference type="GO" id="GO:0042761">
    <property type="term" value="P:very long-chain fatty acid biosynthetic process"/>
    <property type="evidence" value="ECO:0000250"/>
    <property type="project" value="UniProtKB"/>
</dbReference>
<dbReference type="InterPro" id="IPR007482">
    <property type="entry name" value="Tyr_Pase-like_PTPLA"/>
</dbReference>
<dbReference type="PANTHER" id="PTHR11035">
    <property type="entry name" value="VERY-LONG-CHAIN (3R)-3-HYDROXYACYL-COA DEHYDRATASE"/>
    <property type="match status" value="1"/>
</dbReference>
<dbReference type="PANTHER" id="PTHR11035:SF22">
    <property type="entry name" value="VERY-LONG-CHAIN (3R)-3-HYDROXYACYL-COA DEHYDRATASE 1"/>
    <property type="match status" value="1"/>
</dbReference>
<dbReference type="Pfam" id="PF04387">
    <property type="entry name" value="PTPLA"/>
    <property type="match status" value="1"/>
</dbReference>